<accession>B4EUF6</accession>
<keyword id="KW-0067">ATP-binding</keyword>
<keyword id="KW-0315">Glutamine amidotransferase</keyword>
<keyword id="KW-0436">Ligase</keyword>
<keyword id="KW-0460">Magnesium</keyword>
<keyword id="KW-0479">Metal-binding</keyword>
<keyword id="KW-0547">Nucleotide-binding</keyword>
<keyword id="KW-0665">Pyrimidine biosynthesis</keyword>
<keyword id="KW-1185">Reference proteome</keyword>
<evidence type="ECO:0000255" key="1">
    <source>
        <dbReference type="HAMAP-Rule" id="MF_01227"/>
    </source>
</evidence>
<name>PYRG_PROMH</name>
<proteinExistence type="inferred from homology"/>
<feature type="chain" id="PRO_1000139527" description="CTP synthase">
    <location>
        <begin position="1"/>
        <end position="545"/>
    </location>
</feature>
<feature type="domain" description="Glutamine amidotransferase type-1" evidence="1">
    <location>
        <begin position="291"/>
        <end position="542"/>
    </location>
</feature>
<feature type="region of interest" description="Amidoligase domain" evidence="1">
    <location>
        <begin position="1"/>
        <end position="266"/>
    </location>
</feature>
<feature type="active site" description="Nucleophile; for glutamine hydrolysis" evidence="1">
    <location>
        <position position="379"/>
    </location>
</feature>
<feature type="active site" evidence="1">
    <location>
        <position position="515"/>
    </location>
</feature>
<feature type="active site" evidence="1">
    <location>
        <position position="517"/>
    </location>
</feature>
<feature type="binding site" evidence="1">
    <location>
        <position position="14"/>
    </location>
    <ligand>
        <name>CTP</name>
        <dbReference type="ChEBI" id="CHEBI:37563"/>
        <note>allosteric inhibitor</note>
    </ligand>
</feature>
<feature type="binding site" evidence="1">
    <location>
        <position position="14"/>
    </location>
    <ligand>
        <name>UTP</name>
        <dbReference type="ChEBI" id="CHEBI:46398"/>
    </ligand>
</feature>
<feature type="binding site" evidence="1">
    <location>
        <begin position="15"/>
        <end position="20"/>
    </location>
    <ligand>
        <name>ATP</name>
        <dbReference type="ChEBI" id="CHEBI:30616"/>
    </ligand>
</feature>
<feature type="binding site" evidence="1">
    <location>
        <position position="72"/>
    </location>
    <ligand>
        <name>ATP</name>
        <dbReference type="ChEBI" id="CHEBI:30616"/>
    </ligand>
</feature>
<feature type="binding site" evidence="1">
    <location>
        <position position="72"/>
    </location>
    <ligand>
        <name>Mg(2+)</name>
        <dbReference type="ChEBI" id="CHEBI:18420"/>
    </ligand>
</feature>
<feature type="binding site" evidence="1">
    <location>
        <position position="140"/>
    </location>
    <ligand>
        <name>Mg(2+)</name>
        <dbReference type="ChEBI" id="CHEBI:18420"/>
    </ligand>
</feature>
<feature type="binding site" evidence="1">
    <location>
        <begin position="147"/>
        <end position="149"/>
    </location>
    <ligand>
        <name>CTP</name>
        <dbReference type="ChEBI" id="CHEBI:37563"/>
        <note>allosteric inhibitor</note>
    </ligand>
</feature>
<feature type="binding site" evidence="1">
    <location>
        <begin position="187"/>
        <end position="192"/>
    </location>
    <ligand>
        <name>CTP</name>
        <dbReference type="ChEBI" id="CHEBI:37563"/>
        <note>allosteric inhibitor</note>
    </ligand>
</feature>
<feature type="binding site" evidence="1">
    <location>
        <begin position="187"/>
        <end position="192"/>
    </location>
    <ligand>
        <name>UTP</name>
        <dbReference type="ChEBI" id="CHEBI:46398"/>
    </ligand>
</feature>
<feature type="binding site" evidence="1">
    <location>
        <position position="223"/>
    </location>
    <ligand>
        <name>CTP</name>
        <dbReference type="ChEBI" id="CHEBI:37563"/>
        <note>allosteric inhibitor</note>
    </ligand>
</feature>
<feature type="binding site" evidence="1">
    <location>
        <position position="223"/>
    </location>
    <ligand>
        <name>UTP</name>
        <dbReference type="ChEBI" id="CHEBI:46398"/>
    </ligand>
</feature>
<feature type="binding site" evidence="1">
    <location>
        <begin position="239"/>
        <end position="241"/>
    </location>
    <ligand>
        <name>ATP</name>
        <dbReference type="ChEBI" id="CHEBI:30616"/>
    </ligand>
</feature>
<feature type="binding site" evidence="1">
    <location>
        <position position="352"/>
    </location>
    <ligand>
        <name>L-glutamine</name>
        <dbReference type="ChEBI" id="CHEBI:58359"/>
    </ligand>
</feature>
<feature type="binding site" evidence="1">
    <location>
        <begin position="380"/>
        <end position="383"/>
    </location>
    <ligand>
        <name>L-glutamine</name>
        <dbReference type="ChEBI" id="CHEBI:58359"/>
    </ligand>
</feature>
<feature type="binding site" evidence="1">
    <location>
        <position position="403"/>
    </location>
    <ligand>
        <name>L-glutamine</name>
        <dbReference type="ChEBI" id="CHEBI:58359"/>
    </ligand>
</feature>
<feature type="binding site" evidence="1">
    <location>
        <position position="470"/>
    </location>
    <ligand>
        <name>L-glutamine</name>
        <dbReference type="ChEBI" id="CHEBI:58359"/>
    </ligand>
</feature>
<organism>
    <name type="scientific">Proteus mirabilis (strain HI4320)</name>
    <dbReference type="NCBI Taxonomy" id="529507"/>
    <lineage>
        <taxon>Bacteria</taxon>
        <taxon>Pseudomonadati</taxon>
        <taxon>Pseudomonadota</taxon>
        <taxon>Gammaproteobacteria</taxon>
        <taxon>Enterobacterales</taxon>
        <taxon>Morganellaceae</taxon>
        <taxon>Proteus</taxon>
    </lineage>
</organism>
<gene>
    <name evidence="1" type="primary">pyrG</name>
    <name type="ordered locus">PMI0220</name>
</gene>
<sequence>MKTNYIFVTGGVVSSLGKGIAAASLAAILEARGLNVTMMKLDPYINVDPGTMSPIQHGEVFVTDDGAETDLDLGHYERFIRTKMTRRNNFTTGRVYSEVLRKERRGDYLGATIQVIPHITNEIKERIIRGGEGHDVVLVEVGGTVGDIESLPFLEAIRQMAAEVGREHTFYLHLTLVPYLAASGEVKTKPTQHSVKELLSIGIQPDALICRSDRVIPANERAKIALFCNVPEKAVISLKDVDSIYKIPALLKSQGLDDYICKRFSLDCPVANLSEWEQVIYEEANPEGEVTIGMVGKYVELPDAYKSVIEALKHGGFKSRVAVNIKLIDSQDVETRGVEILKGLDAILVPGGFGERGVEGKIMAARYARENKIPYLGICLGMQVAMIEFARNVANMEDANSTEFAPDCKYPVIALITEWRDENGNLEVRTENSDLGGTMRLGAQPCHLSGDSLVRTLYGKNTITERHRHRYEVNNLLLKRIEDAGLRIAGRSVDNKLVEIIENPNHPWFVACQFHPEFTSTPRDGHPLFAGFVKAAFDYQKGLLK</sequence>
<comment type="function">
    <text evidence="1">Catalyzes the ATP-dependent amination of UTP to CTP with either L-glutamine or ammonia as the source of nitrogen. Regulates intracellular CTP levels through interactions with the four ribonucleotide triphosphates.</text>
</comment>
<comment type="catalytic activity">
    <reaction evidence="1">
        <text>UTP + L-glutamine + ATP + H2O = CTP + L-glutamate + ADP + phosphate + 2 H(+)</text>
        <dbReference type="Rhea" id="RHEA:26426"/>
        <dbReference type="ChEBI" id="CHEBI:15377"/>
        <dbReference type="ChEBI" id="CHEBI:15378"/>
        <dbReference type="ChEBI" id="CHEBI:29985"/>
        <dbReference type="ChEBI" id="CHEBI:30616"/>
        <dbReference type="ChEBI" id="CHEBI:37563"/>
        <dbReference type="ChEBI" id="CHEBI:43474"/>
        <dbReference type="ChEBI" id="CHEBI:46398"/>
        <dbReference type="ChEBI" id="CHEBI:58359"/>
        <dbReference type="ChEBI" id="CHEBI:456216"/>
        <dbReference type="EC" id="6.3.4.2"/>
    </reaction>
</comment>
<comment type="catalytic activity">
    <reaction evidence="1">
        <text>L-glutamine + H2O = L-glutamate + NH4(+)</text>
        <dbReference type="Rhea" id="RHEA:15889"/>
        <dbReference type="ChEBI" id="CHEBI:15377"/>
        <dbReference type="ChEBI" id="CHEBI:28938"/>
        <dbReference type="ChEBI" id="CHEBI:29985"/>
        <dbReference type="ChEBI" id="CHEBI:58359"/>
    </reaction>
</comment>
<comment type="catalytic activity">
    <reaction evidence="1">
        <text>UTP + NH4(+) + ATP = CTP + ADP + phosphate + 2 H(+)</text>
        <dbReference type="Rhea" id="RHEA:16597"/>
        <dbReference type="ChEBI" id="CHEBI:15378"/>
        <dbReference type="ChEBI" id="CHEBI:28938"/>
        <dbReference type="ChEBI" id="CHEBI:30616"/>
        <dbReference type="ChEBI" id="CHEBI:37563"/>
        <dbReference type="ChEBI" id="CHEBI:43474"/>
        <dbReference type="ChEBI" id="CHEBI:46398"/>
        <dbReference type="ChEBI" id="CHEBI:456216"/>
    </reaction>
</comment>
<comment type="activity regulation">
    <text evidence="1">Allosterically activated by GTP, when glutamine is the substrate; GTP has no effect on the reaction when ammonia is the substrate. The allosteric effector GTP functions by stabilizing the protein conformation that binds the tetrahedral intermediate(s) formed during glutamine hydrolysis. Inhibited by the product CTP, via allosteric rather than competitive inhibition.</text>
</comment>
<comment type="pathway">
    <text evidence="1">Pyrimidine metabolism; CTP biosynthesis via de novo pathway; CTP from UDP: step 2/2.</text>
</comment>
<comment type="subunit">
    <text evidence="1">Homotetramer.</text>
</comment>
<comment type="miscellaneous">
    <text evidence="1">CTPSs have evolved a hybrid strategy for distinguishing between UTP and CTP. The overlapping regions of the product feedback inhibitory and substrate sites recognize a common feature in both compounds, the triphosphate moiety. To differentiate isosteric substrate and product pyrimidine rings, an additional pocket far from the expected kinase/ligase catalytic site, specifically recognizes the cytosine and ribose portions of the product inhibitor.</text>
</comment>
<comment type="similarity">
    <text evidence="1">Belongs to the CTP synthase family.</text>
</comment>
<protein>
    <recommendedName>
        <fullName evidence="1">CTP synthase</fullName>
        <ecNumber evidence="1">6.3.4.2</ecNumber>
    </recommendedName>
    <alternativeName>
        <fullName evidence="1">Cytidine 5'-triphosphate synthase</fullName>
    </alternativeName>
    <alternativeName>
        <fullName evidence="1">Cytidine triphosphate synthetase</fullName>
        <shortName evidence="1">CTP synthetase</shortName>
        <shortName evidence="1">CTPS</shortName>
    </alternativeName>
    <alternativeName>
        <fullName evidence="1">UTP--ammonia ligase</fullName>
    </alternativeName>
</protein>
<reference key="1">
    <citation type="journal article" date="2008" name="J. Bacteriol.">
        <title>Complete genome sequence of uropathogenic Proteus mirabilis, a master of both adherence and motility.</title>
        <authorList>
            <person name="Pearson M.M."/>
            <person name="Sebaihia M."/>
            <person name="Churcher C."/>
            <person name="Quail M.A."/>
            <person name="Seshasayee A.S."/>
            <person name="Luscombe N.M."/>
            <person name="Abdellah Z."/>
            <person name="Arrosmith C."/>
            <person name="Atkin B."/>
            <person name="Chillingworth T."/>
            <person name="Hauser H."/>
            <person name="Jagels K."/>
            <person name="Moule S."/>
            <person name="Mungall K."/>
            <person name="Norbertczak H."/>
            <person name="Rabbinowitsch E."/>
            <person name="Walker D."/>
            <person name="Whithead S."/>
            <person name="Thomson N.R."/>
            <person name="Rather P.N."/>
            <person name="Parkhill J."/>
            <person name="Mobley H.L.T."/>
        </authorList>
    </citation>
    <scope>NUCLEOTIDE SEQUENCE [LARGE SCALE GENOMIC DNA]</scope>
    <source>
        <strain>HI4320</strain>
    </source>
</reference>
<dbReference type="EC" id="6.3.4.2" evidence="1"/>
<dbReference type="EMBL" id="AM942759">
    <property type="protein sequence ID" value="CAR40630.1"/>
    <property type="molecule type" value="Genomic_DNA"/>
</dbReference>
<dbReference type="RefSeq" id="WP_004244983.1">
    <property type="nucleotide sequence ID" value="NC_010554.1"/>
</dbReference>
<dbReference type="SMR" id="B4EUF6"/>
<dbReference type="MEROPS" id="C26.964"/>
<dbReference type="EnsemblBacteria" id="CAR40630">
    <property type="protein sequence ID" value="CAR40630"/>
    <property type="gene ID" value="PMI0220"/>
</dbReference>
<dbReference type="GeneID" id="6802440"/>
<dbReference type="KEGG" id="pmr:PMI0220"/>
<dbReference type="eggNOG" id="COG0504">
    <property type="taxonomic scope" value="Bacteria"/>
</dbReference>
<dbReference type="HOGENOM" id="CLU_011675_5_0_6"/>
<dbReference type="UniPathway" id="UPA00159">
    <property type="reaction ID" value="UER00277"/>
</dbReference>
<dbReference type="Proteomes" id="UP000008319">
    <property type="component" value="Chromosome"/>
</dbReference>
<dbReference type="GO" id="GO:0005829">
    <property type="term" value="C:cytosol"/>
    <property type="evidence" value="ECO:0007669"/>
    <property type="project" value="TreeGrafter"/>
</dbReference>
<dbReference type="GO" id="GO:0005524">
    <property type="term" value="F:ATP binding"/>
    <property type="evidence" value="ECO:0007669"/>
    <property type="project" value="UniProtKB-KW"/>
</dbReference>
<dbReference type="GO" id="GO:0003883">
    <property type="term" value="F:CTP synthase activity"/>
    <property type="evidence" value="ECO:0007669"/>
    <property type="project" value="UniProtKB-UniRule"/>
</dbReference>
<dbReference type="GO" id="GO:0004359">
    <property type="term" value="F:glutaminase activity"/>
    <property type="evidence" value="ECO:0007669"/>
    <property type="project" value="RHEA"/>
</dbReference>
<dbReference type="GO" id="GO:0042802">
    <property type="term" value="F:identical protein binding"/>
    <property type="evidence" value="ECO:0007669"/>
    <property type="project" value="TreeGrafter"/>
</dbReference>
<dbReference type="GO" id="GO:0046872">
    <property type="term" value="F:metal ion binding"/>
    <property type="evidence" value="ECO:0007669"/>
    <property type="project" value="UniProtKB-KW"/>
</dbReference>
<dbReference type="GO" id="GO:0044210">
    <property type="term" value="P:'de novo' CTP biosynthetic process"/>
    <property type="evidence" value="ECO:0007669"/>
    <property type="project" value="UniProtKB-UniRule"/>
</dbReference>
<dbReference type="GO" id="GO:0019856">
    <property type="term" value="P:pyrimidine nucleobase biosynthetic process"/>
    <property type="evidence" value="ECO:0007669"/>
    <property type="project" value="TreeGrafter"/>
</dbReference>
<dbReference type="CDD" id="cd03113">
    <property type="entry name" value="CTPS_N"/>
    <property type="match status" value="1"/>
</dbReference>
<dbReference type="CDD" id="cd01746">
    <property type="entry name" value="GATase1_CTP_Synthase"/>
    <property type="match status" value="1"/>
</dbReference>
<dbReference type="FunFam" id="3.40.50.300:FF:000009">
    <property type="entry name" value="CTP synthase"/>
    <property type="match status" value="1"/>
</dbReference>
<dbReference type="FunFam" id="3.40.50.880:FF:000002">
    <property type="entry name" value="CTP synthase"/>
    <property type="match status" value="1"/>
</dbReference>
<dbReference type="Gene3D" id="3.40.50.880">
    <property type="match status" value="1"/>
</dbReference>
<dbReference type="Gene3D" id="3.40.50.300">
    <property type="entry name" value="P-loop containing nucleotide triphosphate hydrolases"/>
    <property type="match status" value="1"/>
</dbReference>
<dbReference type="HAMAP" id="MF_01227">
    <property type="entry name" value="PyrG"/>
    <property type="match status" value="1"/>
</dbReference>
<dbReference type="InterPro" id="IPR029062">
    <property type="entry name" value="Class_I_gatase-like"/>
</dbReference>
<dbReference type="InterPro" id="IPR004468">
    <property type="entry name" value="CTP_synthase"/>
</dbReference>
<dbReference type="InterPro" id="IPR017456">
    <property type="entry name" value="CTP_synthase_N"/>
</dbReference>
<dbReference type="InterPro" id="IPR017926">
    <property type="entry name" value="GATASE"/>
</dbReference>
<dbReference type="InterPro" id="IPR033828">
    <property type="entry name" value="GATase1_CTP_Synthase"/>
</dbReference>
<dbReference type="InterPro" id="IPR027417">
    <property type="entry name" value="P-loop_NTPase"/>
</dbReference>
<dbReference type="NCBIfam" id="NF003792">
    <property type="entry name" value="PRK05380.1"/>
    <property type="match status" value="1"/>
</dbReference>
<dbReference type="NCBIfam" id="TIGR00337">
    <property type="entry name" value="PyrG"/>
    <property type="match status" value="1"/>
</dbReference>
<dbReference type="PANTHER" id="PTHR11550">
    <property type="entry name" value="CTP SYNTHASE"/>
    <property type="match status" value="1"/>
</dbReference>
<dbReference type="PANTHER" id="PTHR11550:SF0">
    <property type="entry name" value="CTP SYNTHASE-RELATED"/>
    <property type="match status" value="1"/>
</dbReference>
<dbReference type="Pfam" id="PF06418">
    <property type="entry name" value="CTP_synth_N"/>
    <property type="match status" value="1"/>
</dbReference>
<dbReference type="Pfam" id="PF00117">
    <property type="entry name" value="GATase"/>
    <property type="match status" value="1"/>
</dbReference>
<dbReference type="SUPFAM" id="SSF52317">
    <property type="entry name" value="Class I glutamine amidotransferase-like"/>
    <property type="match status" value="1"/>
</dbReference>
<dbReference type="SUPFAM" id="SSF52540">
    <property type="entry name" value="P-loop containing nucleoside triphosphate hydrolases"/>
    <property type="match status" value="1"/>
</dbReference>
<dbReference type="PROSITE" id="PS51273">
    <property type="entry name" value="GATASE_TYPE_1"/>
    <property type="match status" value="1"/>
</dbReference>